<feature type="chain" id="PRO_0000284927" description="Centriolar and ciliogenesis-associated protein HYLS1">
    <location>
        <begin position="1"/>
        <end position="307"/>
    </location>
</feature>
<feature type="region of interest" description="Disordered" evidence="4">
    <location>
        <begin position="47"/>
        <end position="78"/>
    </location>
</feature>
<dbReference type="EMBL" id="AK013896">
    <property type="protein sequence ID" value="BAB29044.1"/>
    <property type="status" value="ALT_FRAME"/>
    <property type="molecule type" value="mRNA"/>
</dbReference>
<dbReference type="EMBL" id="AK131639">
    <property type="protein sequence ID" value="BAE20733.1"/>
    <property type="molecule type" value="mRNA"/>
</dbReference>
<dbReference type="EMBL" id="BC035953">
    <property type="protein sequence ID" value="AAH35953.1"/>
    <property type="status" value="ALT_INIT"/>
    <property type="molecule type" value="mRNA"/>
</dbReference>
<dbReference type="RefSeq" id="NP_084038.1">
    <property type="nucleotide sequence ID" value="NM_029762.1"/>
</dbReference>
<dbReference type="FunCoup" id="Q9CXX0">
    <property type="interactions" value="435"/>
</dbReference>
<dbReference type="IntAct" id="Q9CXX0">
    <property type="interactions" value="1"/>
</dbReference>
<dbReference type="MINT" id="Q9CXX0"/>
<dbReference type="STRING" id="10090.ENSMUSP00000110762"/>
<dbReference type="GlyGen" id="Q9CXX0">
    <property type="glycosylation" value="1 site"/>
</dbReference>
<dbReference type="iPTMnet" id="Q9CXX0"/>
<dbReference type="PhosphoSitePlus" id="Q9CXX0"/>
<dbReference type="PaxDb" id="10090-ENSMUSP00000110762"/>
<dbReference type="ProteomicsDB" id="273297"/>
<dbReference type="GeneID" id="76832"/>
<dbReference type="KEGG" id="mmu:76832"/>
<dbReference type="UCSC" id="uc009oti.2">
    <property type="organism name" value="mouse"/>
</dbReference>
<dbReference type="AGR" id="MGI:1924082"/>
<dbReference type="CTD" id="219844"/>
<dbReference type="MGI" id="MGI:1924082">
    <property type="gene designation" value="Hyls1"/>
</dbReference>
<dbReference type="eggNOG" id="ENOG502QVD7">
    <property type="taxonomic scope" value="Eukaryota"/>
</dbReference>
<dbReference type="InParanoid" id="Q9CXX0"/>
<dbReference type="OrthoDB" id="6343432at2759"/>
<dbReference type="TreeFam" id="TF336132"/>
<dbReference type="BioGRID-ORCS" id="76832">
    <property type="hits" value="10 hits in 79 CRISPR screens"/>
</dbReference>
<dbReference type="ChiTaRS" id="Hyls1">
    <property type="organism name" value="mouse"/>
</dbReference>
<dbReference type="PRO" id="PR:Q9CXX0"/>
<dbReference type="Proteomes" id="UP000000589">
    <property type="component" value="Unplaced"/>
</dbReference>
<dbReference type="RNAct" id="Q9CXX0">
    <property type="molecule type" value="protein"/>
</dbReference>
<dbReference type="GO" id="GO:0005814">
    <property type="term" value="C:centriole"/>
    <property type="evidence" value="ECO:0007669"/>
    <property type="project" value="UniProtKB-SubCell"/>
</dbReference>
<dbReference type="GO" id="GO:0005929">
    <property type="term" value="C:cilium"/>
    <property type="evidence" value="ECO:0000250"/>
    <property type="project" value="UniProtKB"/>
</dbReference>
<dbReference type="GO" id="GO:0005737">
    <property type="term" value="C:cytoplasm"/>
    <property type="evidence" value="ECO:0000266"/>
    <property type="project" value="MGI"/>
</dbReference>
<dbReference type="GO" id="GO:0005634">
    <property type="term" value="C:nucleus"/>
    <property type="evidence" value="ECO:0000266"/>
    <property type="project" value="MGI"/>
</dbReference>
<dbReference type="GO" id="GO:0060271">
    <property type="term" value="P:cilium assembly"/>
    <property type="evidence" value="ECO:0000250"/>
    <property type="project" value="UniProtKB"/>
</dbReference>
<dbReference type="InterPro" id="IPR052319">
    <property type="entry name" value="Centriolar_ciliogenesis_assoc"/>
</dbReference>
<dbReference type="InterPro" id="IPR026227">
    <property type="entry name" value="HYLS1"/>
</dbReference>
<dbReference type="InterPro" id="IPR027918">
    <property type="entry name" value="HYLS1_C_dom"/>
</dbReference>
<dbReference type="PANTHER" id="PTHR34174:SF1">
    <property type="entry name" value="CENTRIOLAR AND CILIOGENESIS-ASSOCIATED PROTEIN HYLS1"/>
    <property type="match status" value="1"/>
</dbReference>
<dbReference type="PANTHER" id="PTHR34174">
    <property type="entry name" value="HYDROLETHALUS SYNDROME PROTEIN 1"/>
    <property type="match status" value="1"/>
</dbReference>
<dbReference type="Pfam" id="PF15311">
    <property type="entry name" value="HYLS1_C"/>
    <property type="match status" value="1"/>
</dbReference>
<dbReference type="PRINTS" id="PR02098">
    <property type="entry name" value="HYLETHALUSS1"/>
</dbReference>
<evidence type="ECO:0000250" key="1">
    <source>
        <dbReference type="UniProtKB" id="A0A1L8ER70"/>
    </source>
</evidence>
<evidence type="ECO:0000250" key="2">
    <source>
        <dbReference type="UniProtKB" id="Q95X94"/>
    </source>
</evidence>
<evidence type="ECO:0000250" key="3">
    <source>
        <dbReference type="UniProtKB" id="Q96M11"/>
    </source>
</evidence>
<evidence type="ECO:0000256" key="4">
    <source>
        <dbReference type="SAM" id="MobiDB-lite"/>
    </source>
</evidence>
<evidence type="ECO:0000269" key="5">
    <source>
    </source>
</evidence>
<evidence type="ECO:0000305" key="6"/>
<name>HYLS1_MOUSE</name>
<keyword id="KW-0966">Cell projection</keyword>
<keyword id="KW-0970">Cilium biogenesis/degradation</keyword>
<keyword id="KW-0963">Cytoplasm</keyword>
<keyword id="KW-0206">Cytoskeleton</keyword>
<keyword id="KW-1185">Reference proteome</keyword>
<organism>
    <name type="scientific">Mus musculus</name>
    <name type="common">Mouse</name>
    <dbReference type="NCBI Taxonomy" id="10090"/>
    <lineage>
        <taxon>Eukaryota</taxon>
        <taxon>Metazoa</taxon>
        <taxon>Chordata</taxon>
        <taxon>Craniata</taxon>
        <taxon>Vertebrata</taxon>
        <taxon>Euteleostomi</taxon>
        <taxon>Mammalia</taxon>
        <taxon>Eutheria</taxon>
        <taxon>Euarchontoglires</taxon>
        <taxon>Glires</taxon>
        <taxon>Rodentia</taxon>
        <taxon>Myomorpha</taxon>
        <taxon>Muroidea</taxon>
        <taxon>Muridae</taxon>
        <taxon>Murinae</taxon>
        <taxon>Mus</taxon>
        <taxon>Mus</taxon>
    </lineage>
</organism>
<protein>
    <recommendedName>
        <fullName evidence="6">Centriolar and ciliogenesis-associated protein HYLS1</fullName>
    </recommendedName>
    <alternativeName>
        <fullName>Hydrolethalus syndrome protein 1 homolog</fullName>
    </alternativeName>
</protein>
<reference key="1">
    <citation type="journal article" date="2005" name="Science">
        <title>The transcriptional landscape of the mammalian genome.</title>
        <authorList>
            <person name="Carninci P."/>
            <person name="Kasukawa T."/>
            <person name="Katayama S."/>
            <person name="Gough J."/>
            <person name="Frith M.C."/>
            <person name="Maeda N."/>
            <person name="Oyama R."/>
            <person name="Ravasi T."/>
            <person name="Lenhard B."/>
            <person name="Wells C."/>
            <person name="Kodzius R."/>
            <person name="Shimokawa K."/>
            <person name="Bajic V.B."/>
            <person name="Brenner S.E."/>
            <person name="Batalov S."/>
            <person name="Forrest A.R."/>
            <person name="Zavolan M."/>
            <person name="Davis M.J."/>
            <person name="Wilming L.G."/>
            <person name="Aidinis V."/>
            <person name="Allen J.E."/>
            <person name="Ambesi-Impiombato A."/>
            <person name="Apweiler R."/>
            <person name="Aturaliya R.N."/>
            <person name="Bailey T.L."/>
            <person name="Bansal M."/>
            <person name="Baxter L."/>
            <person name="Beisel K.W."/>
            <person name="Bersano T."/>
            <person name="Bono H."/>
            <person name="Chalk A.M."/>
            <person name="Chiu K.P."/>
            <person name="Choudhary V."/>
            <person name="Christoffels A."/>
            <person name="Clutterbuck D.R."/>
            <person name="Crowe M.L."/>
            <person name="Dalla E."/>
            <person name="Dalrymple B.P."/>
            <person name="de Bono B."/>
            <person name="Della Gatta G."/>
            <person name="di Bernardo D."/>
            <person name="Down T."/>
            <person name="Engstrom P."/>
            <person name="Fagiolini M."/>
            <person name="Faulkner G."/>
            <person name="Fletcher C.F."/>
            <person name="Fukushima T."/>
            <person name="Furuno M."/>
            <person name="Futaki S."/>
            <person name="Gariboldi M."/>
            <person name="Georgii-Hemming P."/>
            <person name="Gingeras T.R."/>
            <person name="Gojobori T."/>
            <person name="Green R.E."/>
            <person name="Gustincich S."/>
            <person name="Harbers M."/>
            <person name="Hayashi Y."/>
            <person name="Hensch T.K."/>
            <person name="Hirokawa N."/>
            <person name="Hill D."/>
            <person name="Huminiecki L."/>
            <person name="Iacono M."/>
            <person name="Ikeo K."/>
            <person name="Iwama A."/>
            <person name="Ishikawa T."/>
            <person name="Jakt M."/>
            <person name="Kanapin A."/>
            <person name="Katoh M."/>
            <person name="Kawasawa Y."/>
            <person name="Kelso J."/>
            <person name="Kitamura H."/>
            <person name="Kitano H."/>
            <person name="Kollias G."/>
            <person name="Krishnan S.P."/>
            <person name="Kruger A."/>
            <person name="Kummerfeld S.K."/>
            <person name="Kurochkin I.V."/>
            <person name="Lareau L.F."/>
            <person name="Lazarevic D."/>
            <person name="Lipovich L."/>
            <person name="Liu J."/>
            <person name="Liuni S."/>
            <person name="McWilliam S."/>
            <person name="Madan Babu M."/>
            <person name="Madera M."/>
            <person name="Marchionni L."/>
            <person name="Matsuda H."/>
            <person name="Matsuzawa S."/>
            <person name="Miki H."/>
            <person name="Mignone F."/>
            <person name="Miyake S."/>
            <person name="Morris K."/>
            <person name="Mottagui-Tabar S."/>
            <person name="Mulder N."/>
            <person name="Nakano N."/>
            <person name="Nakauchi H."/>
            <person name="Ng P."/>
            <person name="Nilsson R."/>
            <person name="Nishiguchi S."/>
            <person name="Nishikawa S."/>
            <person name="Nori F."/>
            <person name="Ohara O."/>
            <person name="Okazaki Y."/>
            <person name="Orlando V."/>
            <person name="Pang K.C."/>
            <person name="Pavan W.J."/>
            <person name="Pavesi G."/>
            <person name="Pesole G."/>
            <person name="Petrovsky N."/>
            <person name="Piazza S."/>
            <person name="Reed J."/>
            <person name="Reid J.F."/>
            <person name="Ring B.Z."/>
            <person name="Ringwald M."/>
            <person name="Rost B."/>
            <person name="Ruan Y."/>
            <person name="Salzberg S.L."/>
            <person name="Sandelin A."/>
            <person name="Schneider C."/>
            <person name="Schoenbach C."/>
            <person name="Sekiguchi K."/>
            <person name="Semple C.A."/>
            <person name="Seno S."/>
            <person name="Sessa L."/>
            <person name="Sheng Y."/>
            <person name="Shibata Y."/>
            <person name="Shimada H."/>
            <person name="Shimada K."/>
            <person name="Silva D."/>
            <person name="Sinclair B."/>
            <person name="Sperling S."/>
            <person name="Stupka E."/>
            <person name="Sugiura K."/>
            <person name="Sultana R."/>
            <person name="Takenaka Y."/>
            <person name="Taki K."/>
            <person name="Tammoja K."/>
            <person name="Tan S.L."/>
            <person name="Tang S."/>
            <person name="Taylor M.S."/>
            <person name="Tegner J."/>
            <person name="Teichmann S.A."/>
            <person name="Ueda H.R."/>
            <person name="van Nimwegen E."/>
            <person name="Verardo R."/>
            <person name="Wei C.L."/>
            <person name="Yagi K."/>
            <person name="Yamanishi H."/>
            <person name="Zabarovsky E."/>
            <person name="Zhu S."/>
            <person name="Zimmer A."/>
            <person name="Hide W."/>
            <person name="Bult C."/>
            <person name="Grimmond S.M."/>
            <person name="Teasdale R.D."/>
            <person name="Liu E.T."/>
            <person name="Brusic V."/>
            <person name="Quackenbush J."/>
            <person name="Wahlestedt C."/>
            <person name="Mattick J.S."/>
            <person name="Hume D.A."/>
            <person name="Kai C."/>
            <person name="Sasaki D."/>
            <person name="Tomaru Y."/>
            <person name="Fukuda S."/>
            <person name="Kanamori-Katayama M."/>
            <person name="Suzuki M."/>
            <person name="Aoki J."/>
            <person name="Arakawa T."/>
            <person name="Iida J."/>
            <person name="Imamura K."/>
            <person name="Itoh M."/>
            <person name="Kato T."/>
            <person name="Kawaji H."/>
            <person name="Kawagashira N."/>
            <person name="Kawashima T."/>
            <person name="Kojima M."/>
            <person name="Kondo S."/>
            <person name="Konno H."/>
            <person name="Nakano K."/>
            <person name="Ninomiya N."/>
            <person name="Nishio T."/>
            <person name="Okada M."/>
            <person name="Plessy C."/>
            <person name="Shibata K."/>
            <person name="Shiraki T."/>
            <person name="Suzuki S."/>
            <person name="Tagami M."/>
            <person name="Waki K."/>
            <person name="Watahiki A."/>
            <person name="Okamura-Oho Y."/>
            <person name="Suzuki H."/>
            <person name="Kawai J."/>
            <person name="Hayashizaki Y."/>
        </authorList>
    </citation>
    <scope>NUCLEOTIDE SEQUENCE [LARGE SCALE MRNA]</scope>
    <source>
        <strain>C57BL/6J</strain>
        <tissue>Cerebellum</tissue>
        <tissue>Head</tissue>
    </source>
</reference>
<reference key="2">
    <citation type="journal article" date="2004" name="Genome Res.">
        <title>The status, quality, and expansion of the NIH full-length cDNA project: the Mammalian Gene Collection (MGC).</title>
        <authorList>
            <consortium name="The MGC Project Team"/>
        </authorList>
    </citation>
    <scope>NUCLEOTIDE SEQUENCE [LARGE SCALE MRNA]</scope>
    <source>
        <strain>FVB/N</strain>
        <tissue>Salivary gland</tissue>
    </source>
</reference>
<reference key="3">
    <citation type="journal article" date="2005" name="Hum. Mol. Genet.">
        <title>Hydrolethalus syndrome is caused by a missense mutation in a novel gene HYLS1.</title>
        <authorList>
            <person name="Mee L."/>
            <person name="Honkala H."/>
            <person name="Kopra O."/>
            <person name="Vesa J."/>
            <person name="Finnilae S."/>
            <person name="Visapaeae I."/>
            <person name="Sang T.-K."/>
            <person name="Jackson G.R."/>
            <person name="Salonen R."/>
            <person name="Kestilae M."/>
            <person name="Peltonen L."/>
        </authorList>
    </citation>
    <scope>TISSUE SPECIFICITY</scope>
    <scope>DEVELOPMENTAL STAGE</scope>
</reference>
<comment type="function">
    <text evidence="1 2">Plays a role in ciliogenesis.</text>
</comment>
<comment type="subcellular location">
    <subcellularLocation>
        <location evidence="3">Cytoplasm</location>
    </subcellularLocation>
    <subcellularLocation>
        <location evidence="1 2">Cell projection</location>
        <location evidence="1 2">Cilium</location>
    </subcellularLocation>
    <subcellularLocation>
        <location evidence="1 2">Cytoplasm</location>
        <location evidence="1 2">Cytoskeleton</location>
        <location evidence="1 2">Microtubule organizing center</location>
        <location evidence="1 2">Centrosome</location>
        <location evidence="1 2">Centriole</location>
    </subcellularLocation>
</comment>
<comment type="tissue specificity">
    <text evidence="5">Expressed in hippocampus and dentate gyrus of 3-month adult brain.</text>
</comment>
<comment type="developmental stage">
    <text evidence="5">Detected at each embryonic stage, the highest expression level observed at 11 dpc.</text>
</comment>
<comment type="similarity">
    <text evidence="6">Belongs to the HYLS1 family.</text>
</comment>
<comment type="sequence caution" evidence="6">
    <conflict type="erroneous initiation">
        <sequence resource="EMBL-CDS" id="AAH35953"/>
    </conflict>
</comment>
<comment type="sequence caution" evidence="6">
    <conflict type="frameshift">
        <sequence resource="EMBL-CDS" id="BAB29044"/>
    </conflict>
</comment>
<gene>
    <name type="primary">Hyls1</name>
</gene>
<proteinExistence type="evidence at transcript level"/>
<sequence length="307" mass="35141">MAEKRQAYSVPEAMKQLIGPGGQKWANMDPEERMLAAATAFTRICAGQGEGDSRREAQAGQYDPYSKASVTPGKRPALPMHLHFPHTASRVTSSTVSETSQKCRKPVMKRKVLRRKPDGEVLVTDESVISECESGTESDLGLWDLRHRFMNLQFQEGTESPVVTSQKFNLPCEYQGISQEDQLICYLQREEMDPPVYEQDLIVASRPKSFILPRLDQLSRNRGKIDRVARYFEYKRDWDSMRFPGEDHRKELRWSVRGQMLSRTEPPSKPQHVYVPNNYLVPLRWGVRCDLANGVMPKKLPFPLSPS</sequence>
<accession>Q9CXX0</accession>
<accession>Q3V2R4</accession>
<accession>Q8CI83</accession>